<organism>
    <name type="scientific">Borreliella burgdorferi (strain ATCC 35210 / DSM 4680 / CIP 102532 / B31)</name>
    <name type="common">Borrelia burgdorferi</name>
    <dbReference type="NCBI Taxonomy" id="224326"/>
    <lineage>
        <taxon>Bacteria</taxon>
        <taxon>Pseudomonadati</taxon>
        <taxon>Spirochaetota</taxon>
        <taxon>Spirochaetia</taxon>
        <taxon>Spirochaetales</taxon>
        <taxon>Borreliaceae</taxon>
        <taxon>Borreliella</taxon>
    </lineage>
</organism>
<accession>O51360</accession>
<gene>
    <name type="ordered locus">BB_0399</name>
</gene>
<dbReference type="EMBL" id="AE000783">
    <property type="protein sequence ID" value="AAC66777.1"/>
    <property type="molecule type" value="Genomic_DNA"/>
</dbReference>
<dbReference type="PIR" id="F70149">
    <property type="entry name" value="F70149"/>
</dbReference>
<dbReference type="RefSeq" id="NP_212533.1">
    <property type="nucleotide sequence ID" value="NC_001318.1"/>
</dbReference>
<dbReference type="RefSeq" id="WP_010889743.1">
    <property type="nucleotide sequence ID" value="NC_001318.1"/>
</dbReference>
<dbReference type="SMR" id="O51360"/>
<dbReference type="STRING" id="224326.BB_0399"/>
<dbReference type="PaxDb" id="224326-BB_0399"/>
<dbReference type="EnsemblBacteria" id="AAC66777">
    <property type="protein sequence ID" value="AAC66777"/>
    <property type="gene ID" value="BB_0399"/>
</dbReference>
<dbReference type="KEGG" id="bbu:BB_0399"/>
<dbReference type="PATRIC" id="fig|224326.49.peg.793"/>
<dbReference type="HOGENOM" id="CLU_1264903_0_0_12"/>
<dbReference type="OrthoDB" id="350581at2"/>
<dbReference type="Proteomes" id="UP000001807">
    <property type="component" value="Chromosome"/>
</dbReference>
<dbReference type="Gene3D" id="1.25.40.20">
    <property type="entry name" value="Ankyrin repeat-containing domain"/>
    <property type="match status" value="1"/>
</dbReference>
<dbReference type="InterPro" id="IPR002110">
    <property type="entry name" value="Ankyrin_rpt"/>
</dbReference>
<dbReference type="InterPro" id="IPR036770">
    <property type="entry name" value="Ankyrin_rpt-contain_sf"/>
</dbReference>
<dbReference type="PANTHER" id="PTHR24134:SF9">
    <property type="entry name" value="ANKYRIN REPEAT AND SOCS BOX PROTEIN 8"/>
    <property type="match status" value="1"/>
</dbReference>
<dbReference type="PANTHER" id="PTHR24134">
    <property type="entry name" value="ANKYRIN REPEAT-CONTAINING PROTEIN DDB_G0279043"/>
    <property type="match status" value="1"/>
</dbReference>
<dbReference type="Pfam" id="PF12796">
    <property type="entry name" value="Ank_2"/>
    <property type="match status" value="1"/>
</dbReference>
<dbReference type="SMART" id="SM00248">
    <property type="entry name" value="ANK"/>
    <property type="match status" value="4"/>
</dbReference>
<dbReference type="SUPFAM" id="SSF48403">
    <property type="entry name" value="Ankyrin repeat"/>
    <property type="match status" value="1"/>
</dbReference>
<dbReference type="PROSITE" id="PS50297">
    <property type="entry name" value="ANK_REP_REGION"/>
    <property type="match status" value="1"/>
</dbReference>
<dbReference type="PROSITE" id="PS50088">
    <property type="entry name" value="ANK_REPEAT"/>
    <property type="match status" value="1"/>
</dbReference>
<protein>
    <recommendedName>
        <fullName>Putative ankyrin repeat protein BB_0399</fullName>
    </recommendedName>
</protein>
<sequence>MKKEFIMLLLLLQTIMNLNSINTNTSTSIVKELQKNLYIFNSKEYQKDKDTLNEFINSININDKEILQSLEKIKNELFIISVFFNNKKGILIALNLGAEINFKYKISPISISIINNEFEITKILIDYGISLNQIDDTGYSPIFWAIYTNNEKIFEFLKESGADLSFTLKNRKTPMQAAIETENIKLIKSLEKKKIYIDDNFKKKLKKLKNKEIVRILVK</sequence>
<reference key="1">
    <citation type="journal article" date="1997" name="Nature">
        <title>Genomic sequence of a Lyme disease spirochaete, Borrelia burgdorferi.</title>
        <authorList>
            <person name="Fraser C.M."/>
            <person name="Casjens S."/>
            <person name="Huang W.M."/>
            <person name="Sutton G.G."/>
            <person name="Clayton R.A."/>
            <person name="Lathigra R."/>
            <person name="White O."/>
            <person name="Ketchum K.A."/>
            <person name="Dodson R.J."/>
            <person name="Hickey E.K."/>
            <person name="Gwinn M.L."/>
            <person name="Dougherty B.A."/>
            <person name="Tomb J.-F."/>
            <person name="Fleischmann R.D."/>
            <person name="Richardson D.L."/>
            <person name="Peterson J.D."/>
            <person name="Kerlavage A.R."/>
            <person name="Quackenbush J."/>
            <person name="Salzberg S.L."/>
            <person name="Hanson M."/>
            <person name="van Vugt R."/>
            <person name="Palmer N."/>
            <person name="Adams M.D."/>
            <person name="Gocayne J.D."/>
            <person name="Weidman J.F."/>
            <person name="Utterback T.R."/>
            <person name="Watthey L."/>
            <person name="McDonald L.A."/>
            <person name="Artiach P."/>
            <person name="Bowman C."/>
            <person name="Garland S.A."/>
            <person name="Fujii C."/>
            <person name="Cotton M.D."/>
            <person name="Horst K."/>
            <person name="Roberts K.M."/>
            <person name="Hatch B."/>
            <person name="Smith H.O."/>
            <person name="Venter J.C."/>
        </authorList>
    </citation>
    <scope>NUCLEOTIDE SEQUENCE [LARGE SCALE GENOMIC DNA]</scope>
    <source>
        <strain>ATCC 35210 / DSM 4680 / CIP 102532 / B31</strain>
    </source>
</reference>
<keyword id="KW-0040">ANK repeat</keyword>
<keyword id="KW-1185">Reference proteome</keyword>
<keyword id="KW-0677">Repeat</keyword>
<proteinExistence type="predicted"/>
<name>Y399_BORBU</name>
<feature type="chain" id="PRO_0000067235" description="Putative ankyrin repeat protein BB_0399">
    <location>
        <begin position="1"/>
        <end position="219"/>
    </location>
</feature>
<feature type="repeat" description="ANK 1">
    <location>
        <begin position="104"/>
        <end position="133"/>
    </location>
</feature>
<feature type="repeat" description="ANK 2">
    <location>
        <begin position="137"/>
        <end position="166"/>
    </location>
</feature>
<feature type="repeat" description="ANK 3">
    <location>
        <begin position="170"/>
        <end position="199"/>
    </location>
</feature>